<organism>
    <name type="scientific">Pasteurella multocida (strain Pm70)</name>
    <dbReference type="NCBI Taxonomy" id="272843"/>
    <lineage>
        <taxon>Bacteria</taxon>
        <taxon>Pseudomonadati</taxon>
        <taxon>Pseudomonadota</taxon>
        <taxon>Gammaproteobacteria</taxon>
        <taxon>Pasteurellales</taxon>
        <taxon>Pasteurellaceae</taxon>
        <taxon>Pasteurella</taxon>
    </lineage>
</organism>
<keyword id="KW-0028">Amino-acid biosynthesis</keyword>
<keyword id="KW-0479">Metal-binding</keyword>
<keyword id="KW-0486">Methionine biosynthesis</keyword>
<keyword id="KW-0489">Methyltransferase</keyword>
<keyword id="KW-1185">Reference proteome</keyword>
<keyword id="KW-0677">Repeat</keyword>
<keyword id="KW-0808">Transferase</keyword>
<keyword id="KW-0862">Zinc</keyword>
<protein>
    <recommendedName>
        <fullName evidence="1">5-methyltetrahydropteroyltriglutamate--homocysteine methyltransferase</fullName>
        <ecNumber evidence="1">2.1.1.14</ecNumber>
    </recommendedName>
    <alternativeName>
        <fullName evidence="1">Cobalamin-independent methionine synthase</fullName>
    </alternativeName>
    <alternativeName>
        <fullName evidence="1">Methionine synthase, vitamin-B12 independent isozyme</fullName>
    </alternativeName>
</protein>
<gene>
    <name evidence="1" type="primary">metE</name>
    <name type="ordered locus">PM0420</name>
</gene>
<name>METE_PASMU</name>
<reference key="1">
    <citation type="journal article" date="2001" name="Proc. Natl. Acad. Sci. U.S.A.">
        <title>Complete genomic sequence of Pasteurella multocida Pm70.</title>
        <authorList>
            <person name="May B.J."/>
            <person name="Zhang Q."/>
            <person name="Li L.L."/>
            <person name="Paustian M.L."/>
            <person name="Whittam T.S."/>
            <person name="Kapur V."/>
        </authorList>
    </citation>
    <scope>NUCLEOTIDE SEQUENCE [LARGE SCALE GENOMIC DNA]</scope>
    <source>
        <strain>Pm70</strain>
    </source>
</reference>
<feature type="chain" id="PRO_0000098646" description="5-methyltetrahydropteroyltriglutamate--homocysteine methyltransferase">
    <location>
        <begin position="1"/>
        <end position="757"/>
    </location>
</feature>
<feature type="active site" description="Proton donor" evidence="1">
    <location>
        <position position="696"/>
    </location>
</feature>
<feature type="binding site" evidence="1">
    <location>
        <begin position="16"/>
        <end position="19"/>
    </location>
    <ligand>
        <name>5-methyltetrahydropteroyltri-L-glutamate</name>
        <dbReference type="ChEBI" id="CHEBI:58207"/>
    </ligand>
</feature>
<feature type="binding site" evidence="1">
    <location>
        <position position="112"/>
    </location>
    <ligand>
        <name>5-methyltetrahydropteroyltri-L-glutamate</name>
        <dbReference type="ChEBI" id="CHEBI:58207"/>
    </ligand>
</feature>
<feature type="binding site" evidence="1">
    <location>
        <begin position="433"/>
        <end position="435"/>
    </location>
    <ligand>
        <name>L-homocysteine</name>
        <dbReference type="ChEBI" id="CHEBI:58199"/>
    </ligand>
</feature>
<feature type="binding site" evidence="1">
    <location>
        <begin position="433"/>
        <end position="435"/>
    </location>
    <ligand>
        <name>L-methionine</name>
        <dbReference type="ChEBI" id="CHEBI:57844"/>
    </ligand>
</feature>
<feature type="binding site" evidence="1">
    <location>
        <position position="486"/>
    </location>
    <ligand>
        <name>L-homocysteine</name>
        <dbReference type="ChEBI" id="CHEBI:58199"/>
    </ligand>
</feature>
<feature type="binding site" evidence="1">
    <location>
        <position position="486"/>
    </location>
    <ligand>
        <name>L-methionine</name>
        <dbReference type="ChEBI" id="CHEBI:57844"/>
    </ligand>
</feature>
<feature type="binding site" evidence="1">
    <location>
        <begin position="517"/>
        <end position="518"/>
    </location>
    <ligand>
        <name>5-methyltetrahydropteroyltri-L-glutamate</name>
        <dbReference type="ChEBI" id="CHEBI:58207"/>
    </ligand>
</feature>
<feature type="binding site" evidence="1">
    <location>
        <position position="563"/>
    </location>
    <ligand>
        <name>5-methyltetrahydropteroyltri-L-glutamate</name>
        <dbReference type="ChEBI" id="CHEBI:58207"/>
    </ligand>
</feature>
<feature type="binding site" evidence="1">
    <location>
        <position position="601"/>
    </location>
    <ligand>
        <name>L-homocysteine</name>
        <dbReference type="ChEBI" id="CHEBI:58199"/>
    </ligand>
</feature>
<feature type="binding site" evidence="1">
    <location>
        <position position="601"/>
    </location>
    <ligand>
        <name>L-methionine</name>
        <dbReference type="ChEBI" id="CHEBI:57844"/>
    </ligand>
</feature>
<feature type="binding site" evidence="1">
    <location>
        <position position="607"/>
    </location>
    <ligand>
        <name>5-methyltetrahydropteroyltri-L-glutamate</name>
        <dbReference type="ChEBI" id="CHEBI:58207"/>
    </ligand>
</feature>
<feature type="binding site" evidence="1">
    <location>
        <position position="643"/>
    </location>
    <ligand>
        <name>Zn(2+)</name>
        <dbReference type="ChEBI" id="CHEBI:29105"/>
        <note>catalytic</note>
    </ligand>
</feature>
<feature type="binding site" evidence="1">
    <location>
        <position position="645"/>
    </location>
    <ligand>
        <name>Zn(2+)</name>
        <dbReference type="ChEBI" id="CHEBI:29105"/>
        <note>catalytic</note>
    </ligand>
</feature>
<feature type="binding site" evidence="1">
    <location>
        <position position="667"/>
    </location>
    <ligand>
        <name>Zn(2+)</name>
        <dbReference type="ChEBI" id="CHEBI:29105"/>
        <note>catalytic</note>
    </ligand>
</feature>
<feature type="binding site" evidence="1">
    <location>
        <position position="728"/>
    </location>
    <ligand>
        <name>Zn(2+)</name>
        <dbReference type="ChEBI" id="CHEBI:29105"/>
        <note>catalytic</note>
    </ligand>
</feature>
<dbReference type="EC" id="2.1.1.14" evidence="1"/>
<dbReference type="EMBL" id="AE004439">
    <property type="protein sequence ID" value="AAK02504.1"/>
    <property type="molecule type" value="Genomic_DNA"/>
</dbReference>
<dbReference type="RefSeq" id="WP_010906634.1">
    <property type="nucleotide sequence ID" value="NC_002663.1"/>
</dbReference>
<dbReference type="SMR" id="P57843"/>
<dbReference type="STRING" id="272843.PM0420"/>
<dbReference type="EnsemblBacteria" id="AAK02504">
    <property type="protein sequence ID" value="AAK02504"/>
    <property type="gene ID" value="PM0420"/>
</dbReference>
<dbReference type="KEGG" id="pmu:PM0420"/>
<dbReference type="PATRIC" id="fig|272843.6.peg.432"/>
<dbReference type="HOGENOM" id="CLU_013175_0_0_6"/>
<dbReference type="OrthoDB" id="244285at2"/>
<dbReference type="UniPathway" id="UPA00051">
    <property type="reaction ID" value="UER00082"/>
</dbReference>
<dbReference type="Proteomes" id="UP000000809">
    <property type="component" value="Chromosome"/>
</dbReference>
<dbReference type="GO" id="GO:0003871">
    <property type="term" value="F:5-methyltetrahydropteroyltriglutamate-homocysteine S-methyltransferase activity"/>
    <property type="evidence" value="ECO:0007669"/>
    <property type="project" value="UniProtKB-UniRule"/>
</dbReference>
<dbReference type="GO" id="GO:0008270">
    <property type="term" value="F:zinc ion binding"/>
    <property type="evidence" value="ECO:0007669"/>
    <property type="project" value="InterPro"/>
</dbReference>
<dbReference type="GO" id="GO:0009086">
    <property type="term" value="P:methionine biosynthetic process"/>
    <property type="evidence" value="ECO:0007669"/>
    <property type="project" value="UniProtKB-UniRule"/>
</dbReference>
<dbReference type="GO" id="GO:0032259">
    <property type="term" value="P:methylation"/>
    <property type="evidence" value="ECO:0007669"/>
    <property type="project" value="UniProtKB-KW"/>
</dbReference>
<dbReference type="CDD" id="cd03311">
    <property type="entry name" value="CIMS_C_terminal_like"/>
    <property type="match status" value="1"/>
</dbReference>
<dbReference type="CDD" id="cd03312">
    <property type="entry name" value="CIMS_N_terminal_like"/>
    <property type="match status" value="1"/>
</dbReference>
<dbReference type="FunFam" id="3.20.20.210:FF:000002">
    <property type="entry name" value="5-methyltetrahydropteroyltriglutamate--homocysteine methyltransferase"/>
    <property type="match status" value="1"/>
</dbReference>
<dbReference type="Gene3D" id="3.20.20.210">
    <property type="match status" value="2"/>
</dbReference>
<dbReference type="HAMAP" id="MF_00172">
    <property type="entry name" value="Meth_synth"/>
    <property type="match status" value="1"/>
</dbReference>
<dbReference type="InterPro" id="IPR013215">
    <property type="entry name" value="Cbl-indep_Met_Synth_N"/>
</dbReference>
<dbReference type="InterPro" id="IPR006276">
    <property type="entry name" value="Cobalamin-indep_Met_synthase"/>
</dbReference>
<dbReference type="InterPro" id="IPR002629">
    <property type="entry name" value="Met_Synth_C/arc"/>
</dbReference>
<dbReference type="InterPro" id="IPR038071">
    <property type="entry name" value="UROD/MetE-like_sf"/>
</dbReference>
<dbReference type="NCBIfam" id="TIGR01371">
    <property type="entry name" value="met_syn_B12ind"/>
    <property type="match status" value="1"/>
</dbReference>
<dbReference type="NCBIfam" id="NF003556">
    <property type="entry name" value="PRK05222.1"/>
    <property type="match status" value="1"/>
</dbReference>
<dbReference type="PANTHER" id="PTHR30519">
    <property type="entry name" value="5-METHYLTETRAHYDROPTEROYLTRIGLUTAMATE--HOMOCYSTEINE METHYLTRANSFERASE"/>
    <property type="match status" value="1"/>
</dbReference>
<dbReference type="Pfam" id="PF08267">
    <property type="entry name" value="Meth_synt_1"/>
    <property type="match status" value="1"/>
</dbReference>
<dbReference type="Pfam" id="PF01717">
    <property type="entry name" value="Meth_synt_2"/>
    <property type="match status" value="1"/>
</dbReference>
<dbReference type="PIRSF" id="PIRSF000382">
    <property type="entry name" value="MeTrfase_B12_ind"/>
    <property type="match status" value="1"/>
</dbReference>
<dbReference type="SUPFAM" id="SSF51726">
    <property type="entry name" value="UROD/MetE-like"/>
    <property type="match status" value="2"/>
</dbReference>
<proteinExistence type="inferred from homology"/>
<comment type="function">
    <text evidence="1">Catalyzes the transfer of a methyl group from 5-methyltetrahydrofolate to homocysteine resulting in methionine formation.</text>
</comment>
<comment type="catalytic activity">
    <reaction evidence="1">
        <text>5-methyltetrahydropteroyltri-L-glutamate + L-homocysteine = tetrahydropteroyltri-L-glutamate + L-methionine</text>
        <dbReference type="Rhea" id="RHEA:21196"/>
        <dbReference type="ChEBI" id="CHEBI:57844"/>
        <dbReference type="ChEBI" id="CHEBI:58140"/>
        <dbReference type="ChEBI" id="CHEBI:58199"/>
        <dbReference type="ChEBI" id="CHEBI:58207"/>
        <dbReference type="EC" id="2.1.1.14"/>
    </reaction>
</comment>
<comment type="cofactor">
    <cofactor evidence="1">
        <name>Zn(2+)</name>
        <dbReference type="ChEBI" id="CHEBI:29105"/>
    </cofactor>
    <text evidence="1">Binds 1 zinc ion per subunit.</text>
</comment>
<comment type="pathway">
    <text evidence="1">Amino-acid biosynthesis; L-methionine biosynthesis via de novo pathway; L-methionine from L-homocysteine (MetE route): step 1/1.</text>
</comment>
<comment type="similarity">
    <text evidence="1 2">Belongs to the vitamin-B12 independent methionine synthase family.</text>
</comment>
<evidence type="ECO:0000255" key="1">
    <source>
        <dbReference type="HAMAP-Rule" id="MF_00172"/>
    </source>
</evidence>
<evidence type="ECO:0000305" key="2"/>
<sequence>MTTFHVAGFPRVGAKRELKFAQERYWRGEIAEQDLLEIAQKLREINWKHQAAANADFVAVADFTFYDHILDLQVATGAIPARFGFDSQNLSLNEYFQLARGNQTQFAIEMTKWFDTNYHYLVPEFTKNTEFKANPAHYVQQIREAKALGFKFKPTIVGPLTFLWLGKEKGEAFNRFELLAKLVPVYVEILNALVAEGAEWIQIDEPALAVDLPTEWIEAYKAVYTTLKEKVKAKLLLATYFGSVAEHAPLLKGLPVDGLHIDLVRAPAQLAAFEDYNKVLSVGVIDGRNIWRANLNQVLDVVEPLKAKFGENLWIAPSCSLLHTPYDLEVETQLKANKPELYSWLAFTLQKVQELRVIKTALEQGRGAVQAELDASQAAADARANSKEIHRPEVAERLANLPTDADKRKSPFAERIAKQNAWLNLPLLPTTNIGSFPQTVEIRQARAKFKKGELSVADYEAAMKKEIEFVVRRQEELDLDVLVHGEAERNDMVEYFGELLDGFAFTKFGWVQSYGSRCVKPPVIYGDVVRPEPMTVRWSQYAQSLTNKVMKGMLTGPVTILQWSFVRNDIPRSTVCKQIGVALSDEVLDLEKAGIKVIQIDEPAIREGLPLKRADWDAYLQWAGEAFRLSYMGVQDDTQIHTHMCYSEFNDILPAIAGLDADVITIETSRSDMELLTAFGDFKYPNDIGPGVYDIHSPRVPKAEEIERLLRKALNVVPKERLWVNPDCGLKTRGWPETIAQLEVMMEVTKKLRAELN</sequence>
<accession>P57843</accession>